<sequence length="151" mass="16276">MKVILRKDVAALGDAGEVVAVKNGYANNYLIPQGMATRATEGTLKALETEKKQQARKVELQRTSARELAQKIEQMVLKVQAKAGESGKLFGTVTAGDIADALKAVGVEIDRRKITLEAPVKLLGKYEAEAKLFSDVTVKVTFEVEAEGTEA</sequence>
<organism>
    <name type="scientific">Chlorobium luteolum (strain DSM 273 / BCRC 81028 / 2530)</name>
    <name type="common">Pelodictyon luteolum</name>
    <dbReference type="NCBI Taxonomy" id="319225"/>
    <lineage>
        <taxon>Bacteria</taxon>
        <taxon>Pseudomonadati</taxon>
        <taxon>Chlorobiota</taxon>
        <taxon>Chlorobiia</taxon>
        <taxon>Chlorobiales</taxon>
        <taxon>Chlorobiaceae</taxon>
        <taxon>Chlorobium/Pelodictyon group</taxon>
        <taxon>Pelodictyon</taxon>
    </lineage>
</organism>
<name>RL9_CHLL3</name>
<protein>
    <recommendedName>
        <fullName evidence="1">Large ribosomal subunit protein bL9</fullName>
    </recommendedName>
    <alternativeName>
        <fullName evidence="2">50S ribosomal protein L9</fullName>
    </alternativeName>
</protein>
<gene>
    <name evidence="1" type="primary">rplI</name>
    <name type="ordered locus">Plut_0117</name>
</gene>
<proteinExistence type="inferred from homology"/>
<accession>Q3B6M4</accession>
<reference key="1">
    <citation type="submission" date="2005-08" db="EMBL/GenBank/DDBJ databases">
        <title>Complete sequence of Pelodictyon luteolum DSM 273.</title>
        <authorList>
            <consortium name="US DOE Joint Genome Institute"/>
            <person name="Copeland A."/>
            <person name="Lucas S."/>
            <person name="Lapidus A."/>
            <person name="Barry K."/>
            <person name="Detter J.C."/>
            <person name="Glavina T."/>
            <person name="Hammon N."/>
            <person name="Israni S."/>
            <person name="Pitluck S."/>
            <person name="Bryant D."/>
            <person name="Schmutz J."/>
            <person name="Larimer F."/>
            <person name="Land M."/>
            <person name="Kyrpides N."/>
            <person name="Ivanova N."/>
            <person name="Richardson P."/>
        </authorList>
    </citation>
    <scope>NUCLEOTIDE SEQUENCE [LARGE SCALE GENOMIC DNA]</scope>
    <source>
        <strain>DSM 273 / BCRC 81028 / 2530</strain>
    </source>
</reference>
<dbReference type="EMBL" id="CP000096">
    <property type="protein sequence ID" value="ABB23007.1"/>
    <property type="molecule type" value="Genomic_DNA"/>
</dbReference>
<dbReference type="RefSeq" id="WP_011356883.1">
    <property type="nucleotide sequence ID" value="NC_007512.1"/>
</dbReference>
<dbReference type="SMR" id="Q3B6M4"/>
<dbReference type="STRING" id="319225.Plut_0117"/>
<dbReference type="KEGG" id="plt:Plut_0117"/>
<dbReference type="eggNOG" id="COG0359">
    <property type="taxonomic scope" value="Bacteria"/>
</dbReference>
<dbReference type="HOGENOM" id="CLU_078938_3_0_10"/>
<dbReference type="OrthoDB" id="9788336at2"/>
<dbReference type="Proteomes" id="UP000002709">
    <property type="component" value="Chromosome"/>
</dbReference>
<dbReference type="GO" id="GO:1990904">
    <property type="term" value="C:ribonucleoprotein complex"/>
    <property type="evidence" value="ECO:0007669"/>
    <property type="project" value="UniProtKB-KW"/>
</dbReference>
<dbReference type="GO" id="GO:0005840">
    <property type="term" value="C:ribosome"/>
    <property type="evidence" value="ECO:0007669"/>
    <property type="project" value="UniProtKB-KW"/>
</dbReference>
<dbReference type="GO" id="GO:0019843">
    <property type="term" value="F:rRNA binding"/>
    <property type="evidence" value="ECO:0007669"/>
    <property type="project" value="UniProtKB-UniRule"/>
</dbReference>
<dbReference type="GO" id="GO:0003735">
    <property type="term" value="F:structural constituent of ribosome"/>
    <property type="evidence" value="ECO:0007669"/>
    <property type="project" value="InterPro"/>
</dbReference>
<dbReference type="GO" id="GO:0006412">
    <property type="term" value="P:translation"/>
    <property type="evidence" value="ECO:0007669"/>
    <property type="project" value="UniProtKB-UniRule"/>
</dbReference>
<dbReference type="FunFam" id="3.40.5.10:FF:000003">
    <property type="entry name" value="50S ribosomal protein L9"/>
    <property type="match status" value="1"/>
</dbReference>
<dbReference type="Gene3D" id="3.10.430.100">
    <property type="entry name" value="Ribosomal protein L9, C-terminal domain"/>
    <property type="match status" value="1"/>
</dbReference>
<dbReference type="Gene3D" id="3.40.5.10">
    <property type="entry name" value="Ribosomal protein L9, N-terminal domain"/>
    <property type="match status" value="1"/>
</dbReference>
<dbReference type="HAMAP" id="MF_00503">
    <property type="entry name" value="Ribosomal_bL9"/>
    <property type="match status" value="1"/>
</dbReference>
<dbReference type="InterPro" id="IPR000244">
    <property type="entry name" value="Ribosomal_bL9"/>
</dbReference>
<dbReference type="InterPro" id="IPR009027">
    <property type="entry name" value="Ribosomal_bL9/RNase_H1_N"/>
</dbReference>
<dbReference type="InterPro" id="IPR020594">
    <property type="entry name" value="Ribosomal_bL9_bac/chp"/>
</dbReference>
<dbReference type="InterPro" id="IPR020069">
    <property type="entry name" value="Ribosomal_bL9_C"/>
</dbReference>
<dbReference type="InterPro" id="IPR036791">
    <property type="entry name" value="Ribosomal_bL9_C_sf"/>
</dbReference>
<dbReference type="InterPro" id="IPR020070">
    <property type="entry name" value="Ribosomal_bL9_N"/>
</dbReference>
<dbReference type="InterPro" id="IPR036935">
    <property type="entry name" value="Ribosomal_bL9_N_sf"/>
</dbReference>
<dbReference type="NCBIfam" id="TIGR00158">
    <property type="entry name" value="L9"/>
    <property type="match status" value="1"/>
</dbReference>
<dbReference type="PANTHER" id="PTHR21368">
    <property type="entry name" value="50S RIBOSOMAL PROTEIN L9"/>
    <property type="match status" value="1"/>
</dbReference>
<dbReference type="Pfam" id="PF03948">
    <property type="entry name" value="Ribosomal_L9_C"/>
    <property type="match status" value="1"/>
</dbReference>
<dbReference type="Pfam" id="PF01281">
    <property type="entry name" value="Ribosomal_L9_N"/>
    <property type="match status" value="1"/>
</dbReference>
<dbReference type="SUPFAM" id="SSF55658">
    <property type="entry name" value="L9 N-domain-like"/>
    <property type="match status" value="1"/>
</dbReference>
<dbReference type="SUPFAM" id="SSF55653">
    <property type="entry name" value="Ribosomal protein L9 C-domain"/>
    <property type="match status" value="1"/>
</dbReference>
<dbReference type="PROSITE" id="PS00651">
    <property type="entry name" value="RIBOSOMAL_L9"/>
    <property type="match status" value="1"/>
</dbReference>
<evidence type="ECO:0000255" key="1">
    <source>
        <dbReference type="HAMAP-Rule" id="MF_00503"/>
    </source>
</evidence>
<evidence type="ECO:0000305" key="2"/>
<comment type="function">
    <text evidence="1">Binds to the 23S rRNA.</text>
</comment>
<comment type="similarity">
    <text evidence="1">Belongs to the bacterial ribosomal protein bL9 family.</text>
</comment>
<keyword id="KW-1185">Reference proteome</keyword>
<keyword id="KW-0687">Ribonucleoprotein</keyword>
<keyword id="KW-0689">Ribosomal protein</keyword>
<keyword id="KW-0694">RNA-binding</keyword>
<keyword id="KW-0699">rRNA-binding</keyword>
<feature type="chain" id="PRO_0000236560" description="Large ribosomal subunit protein bL9">
    <location>
        <begin position="1"/>
        <end position="151"/>
    </location>
</feature>